<keyword id="KW-0050">Antiport</keyword>
<keyword id="KW-1003">Cell membrane</keyword>
<keyword id="KW-0406">Ion transport</keyword>
<keyword id="KW-0472">Membrane</keyword>
<keyword id="KW-1185">Reference proteome</keyword>
<keyword id="KW-0915">Sodium</keyword>
<keyword id="KW-0739">Sodium transport</keyword>
<keyword id="KW-0812">Transmembrane</keyword>
<keyword id="KW-1133">Transmembrane helix</keyword>
<keyword id="KW-0813">Transport</keyword>
<evidence type="ECO:0000255" key="1"/>
<evidence type="ECO:0000305" key="2"/>
<sequence>MNIVLFLGYLSILFAGGAIIAKIAKKIGIPDIPLLLIFGLILSILNVIPKNIVESSFDFIGNFGLIILLFIGSFEMEWNIMKRVLDVIIKLDILALLIVWIISGIVFNFVFHLPILSLIGLLFGAIVSATDPATLIPIFSSMDIDPEVAITLEAESVFNDPLGIVVTLICLSALGLAKAENPILEFFSLAVGGIILGVIAGKFYEIIISKIKFEDYIAPFTLGLAIAFWYFAEGIFPSITGYEISGFMAVAIMGLYIGNVIVHKKEHKKDMEKVAVFMDELSIFIRILIFVLLGASISIPLLEKYALPAFLCALGSILLARPVGVLIATAIPPIRPLTERIYLALEGPRGVVPATLAAMVYTEIMKHPNIVPKNIASLMPPTELAGTILVATFMTIIVSVVLEASWAKPLANILLKRKTSTS</sequence>
<proteinExistence type="inferred from homology"/>
<accession>Q58916</accession>
<gene>
    <name type="ordered locus">MJ1521</name>
</gene>
<protein>
    <recommendedName>
        <fullName>Probable Na(+)/H(+) antiporter 2</fullName>
    </recommendedName>
    <alternativeName>
        <fullName>MjNhaP2</fullName>
    </alternativeName>
</protein>
<feature type="chain" id="PRO_0000052403" description="Probable Na(+)/H(+) antiporter 2">
    <location>
        <begin position="1"/>
        <end position="422"/>
    </location>
</feature>
<feature type="transmembrane region" description="Helical" evidence="1">
    <location>
        <begin position="3"/>
        <end position="23"/>
    </location>
</feature>
<feature type="transmembrane region" description="Helical" evidence="1">
    <location>
        <begin position="28"/>
        <end position="48"/>
    </location>
</feature>
<feature type="transmembrane region" description="Helical" evidence="1">
    <location>
        <begin position="52"/>
        <end position="72"/>
    </location>
</feature>
<feature type="transmembrane region" description="Helical" evidence="1">
    <location>
        <begin position="93"/>
        <end position="113"/>
    </location>
</feature>
<feature type="transmembrane region" description="Helical" evidence="1">
    <location>
        <begin position="119"/>
        <end position="139"/>
    </location>
</feature>
<feature type="transmembrane region" description="Helical" evidence="1">
    <location>
        <begin position="157"/>
        <end position="177"/>
    </location>
</feature>
<feature type="transmembrane region" description="Helical" evidence="1">
    <location>
        <begin position="183"/>
        <end position="203"/>
    </location>
</feature>
<feature type="transmembrane region" description="Helical" evidence="1">
    <location>
        <begin position="216"/>
        <end position="236"/>
    </location>
</feature>
<feature type="transmembrane region" description="Helical" evidence="1">
    <location>
        <begin position="242"/>
        <end position="262"/>
    </location>
</feature>
<feature type="transmembrane region" description="Helical" evidence="1">
    <location>
        <begin position="281"/>
        <end position="301"/>
    </location>
</feature>
<feature type="transmembrane region" description="Helical" evidence="1">
    <location>
        <begin position="307"/>
        <end position="327"/>
    </location>
</feature>
<feature type="transmembrane region" description="Helical" evidence="1">
    <location>
        <begin position="341"/>
        <end position="361"/>
    </location>
</feature>
<feature type="transmembrane region" description="Helical" evidence="1">
    <location>
        <begin position="384"/>
        <end position="404"/>
    </location>
</feature>
<name>NAH2_METJA</name>
<organism>
    <name type="scientific">Methanocaldococcus jannaschii (strain ATCC 43067 / DSM 2661 / JAL-1 / JCM 10045 / NBRC 100440)</name>
    <name type="common">Methanococcus jannaschii</name>
    <dbReference type="NCBI Taxonomy" id="243232"/>
    <lineage>
        <taxon>Archaea</taxon>
        <taxon>Methanobacteriati</taxon>
        <taxon>Methanobacteriota</taxon>
        <taxon>Methanomada group</taxon>
        <taxon>Methanococci</taxon>
        <taxon>Methanococcales</taxon>
        <taxon>Methanocaldococcaceae</taxon>
        <taxon>Methanocaldococcus</taxon>
    </lineage>
</organism>
<reference key="1">
    <citation type="journal article" date="1996" name="Science">
        <title>Complete genome sequence of the methanogenic archaeon, Methanococcus jannaschii.</title>
        <authorList>
            <person name="Bult C.J."/>
            <person name="White O."/>
            <person name="Olsen G.J."/>
            <person name="Zhou L."/>
            <person name="Fleischmann R.D."/>
            <person name="Sutton G.G."/>
            <person name="Blake J.A."/>
            <person name="FitzGerald L.M."/>
            <person name="Clayton R.A."/>
            <person name="Gocayne J.D."/>
            <person name="Kerlavage A.R."/>
            <person name="Dougherty B.A."/>
            <person name="Tomb J.-F."/>
            <person name="Adams M.D."/>
            <person name="Reich C.I."/>
            <person name="Overbeek R."/>
            <person name="Kirkness E.F."/>
            <person name="Weinstock K.G."/>
            <person name="Merrick J.M."/>
            <person name="Glodek A."/>
            <person name="Scott J.L."/>
            <person name="Geoghagen N.S.M."/>
            <person name="Weidman J.F."/>
            <person name="Fuhrmann J.L."/>
            <person name="Nguyen D."/>
            <person name="Utterback T.R."/>
            <person name="Kelley J.M."/>
            <person name="Peterson J.D."/>
            <person name="Sadow P.W."/>
            <person name="Hanna M.C."/>
            <person name="Cotton M.D."/>
            <person name="Roberts K.M."/>
            <person name="Hurst M.A."/>
            <person name="Kaine B.P."/>
            <person name="Borodovsky M."/>
            <person name="Klenk H.-P."/>
            <person name="Fraser C.M."/>
            <person name="Smith H.O."/>
            <person name="Woese C.R."/>
            <person name="Venter J.C."/>
        </authorList>
    </citation>
    <scope>NUCLEOTIDE SEQUENCE [LARGE SCALE GENOMIC DNA]</scope>
    <source>
        <strain>ATCC 43067 / DSM 2661 / JAL-1 / JCM 10045 / NBRC 100440</strain>
    </source>
</reference>
<reference key="2">
    <citation type="journal article" date="2002" name="FEBS Lett.">
        <title>Identification of a pH regulated Na(+)/H(+) antiporter of Methanococcus jannaschii.</title>
        <authorList>
            <person name="Hellmer J."/>
            <person name="Paetzold R."/>
            <person name="Zeilinger C."/>
        </authorList>
    </citation>
    <scope>SIMILARITY TO NA(+)/H(+) ANTIPORTERS</scope>
</reference>
<comment type="function">
    <text>This is probably a Na(+)/H(+) antiporter.</text>
</comment>
<comment type="subcellular location">
    <subcellularLocation>
        <location evidence="2">Cell membrane</location>
        <topology evidence="2">Multi-pass membrane protein</topology>
    </subcellularLocation>
</comment>
<comment type="similarity">
    <text evidence="2">Belongs to the monovalent cation:proton antiporter 1 (CPA1) transporter (TC 2.A.36) family.</text>
</comment>
<dbReference type="EMBL" id="L77117">
    <property type="protein sequence ID" value="AAB99540.1"/>
    <property type="molecule type" value="Genomic_DNA"/>
</dbReference>
<dbReference type="PIR" id="H64489">
    <property type="entry name" value="H64489"/>
</dbReference>
<dbReference type="RefSeq" id="WP_010871045.1">
    <property type="nucleotide sequence ID" value="NC_000909.1"/>
</dbReference>
<dbReference type="SMR" id="Q58916"/>
<dbReference type="FunCoup" id="Q58916">
    <property type="interactions" value="11"/>
</dbReference>
<dbReference type="STRING" id="243232.MJ_1521"/>
<dbReference type="PaxDb" id="243232-MJ_1521"/>
<dbReference type="EnsemblBacteria" id="AAB99540">
    <property type="protein sequence ID" value="AAB99540"/>
    <property type="gene ID" value="MJ_1521"/>
</dbReference>
<dbReference type="GeneID" id="1452429"/>
<dbReference type="KEGG" id="mja:MJ_1521"/>
<dbReference type="eggNOG" id="arCOG01961">
    <property type="taxonomic scope" value="Archaea"/>
</dbReference>
<dbReference type="HOGENOM" id="CLU_005912_9_3_2"/>
<dbReference type="InParanoid" id="Q58916"/>
<dbReference type="OrthoDB" id="11709at2157"/>
<dbReference type="PhylomeDB" id="Q58916"/>
<dbReference type="Proteomes" id="UP000000805">
    <property type="component" value="Chromosome"/>
</dbReference>
<dbReference type="GO" id="GO:0005886">
    <property type="term" value="C:plasma membrane"/>
    <property type="evidence" value="ECO:0007669"/>
    <property type="project" value="UniProtKB-SubCell"/>
</dbReference>
<dbReference type="GO" id="GO:0015386">
    <property type="term" value="F:potassium:proton antiporter activity"/>
    <property type="evidence" value="ECO:0000318"/>
    <property type="project" value="GO_Central"/>
</dbReference>
<dbReference type="GO" id="GO:0030007">
    <property type="term" value="P:intracellular potassium ion homeostasis"/>
    <property type="evidence" value="ECO:0000318"/>
    <property type="project" value="GO_Central"/>
</dbReference>
<dbReference type="GO" id="GO:0006814">
    <property type="term" value="P:sodium ion transport"/>
    <property type="evidence" value="ECO:0007669"/>
    <property type="project" value="UniProtKB-KW"/>
</dbReference>
<dbReference type="Gene3D" id="1.20.1530.20">
    <property type="match status" value="1"/>
</dbReference>
<dbReference type="InterPro" id="IPR006153">
    <property type="entry name" value="Cation/H_exchanger_TM"/>
</dbReference>
<dbReference type="InterPro" id="IPR038770">
    <property type="entry name" value="Na+/solute_symporter_sf"/>
</dbReference>
<dbReference type="PANTHER" id="PTHR32507">
    <property type="entry name" value="NA(+)/H(+) ANTIPORTER 1"/>
    <property type="match status" value="1"/>
</dbReference>
<dbReference type="PANTHER" id="PTHR32507:SF0">
    <property type="entry name" value="NA(+)_H(+) ANTIPORTER 2-RELATED"/>
    <property type="match status" value="1"/>
</dbReference>
<dbReference type="Pfam" id="PF00999">
    <property type="entry name" value="Na_H_Exchanger"/>
    <property type="match status" value="1"/>
</dbReference>